<gene>
    <name evidence="7" type="primary">claC</name>
</gene>
<name>CLAC_PENCR</name>
<feature type="chain" id="PRO_0000455065" description="Enoyl-CoA isomerase/hydratase claC">
    <location>
        <begin position="1"/>
        <end position="878"/>
    </location>
</feature>
<feature type="region of interest" description="Disordered" evidence="4">
    <location>
        <begin position="541"/>
        <end position="561"/>
    </location>
</feature>
<feature type="binding site" evidence="3">
    <location>
        <begin position="677"/>
        <end position="681"/>
    </location>
    <ligand>
        <name>substrate</name>
    </ligand>
</feature>
<feature type="binding site" evidence="3">
    <location>
        <position position="724"/>
    </location>
    <ligand>
        <name>substrate</name>
    </ligand>
</feature>
<feature type="site" description="Important for catalytic activity" evidence="3">
    <location>
        <position position="747"/>
    </location>
</feature>
<protein>
    <recommendedName>
        <fullName evidence="7">Enoyl-CoA isomerase/hydratase claC</fullName>
        <ecNumber evidence="9">4.2.1.-</ecNumber>
    </recommendedName>
    <alternativeName>
        <fullName evidence="7">Clavatol biosynthesis cluster protein C</fullName>
    </alternativeName>
</protein>
<keyword id="KW-0413">Isomerase</keyword>
<keyword id="KW-0456">Lyase</keyword>
<proteinExistence type="inferred from homology"/>
<dbReference type="EC" id="4.2.1.-" evidence="9"/>
<dbReference type="EMBL" id="MK360918">
    <property type="protein sequence ID" value="QBK15041.1"/>
    <property type="molecule type" value="Genomic_DNA"/>
</dbReference>
<dbReference type="SMR" id="A0A481WNM8"/>
<dbReference type="GO" id="GO:0005739">
    <property type="term" value="C:mitochondrion"/>
    <property type="evidence" value="ECO:0007669"/>
    <property type="project" value="TreeGrafter"/>
</dbReference>
<dbReference type="GO" id="GO:0016853">
    <property type="term" value="F:isomerase activity"/>
    <property type="evidence" value="ECO:0007669"/>
    <property type="project" value="UniProtKB-KW"/>
</dbReference>
<dbReference type="GO" id="GO:0016829">
    <property type="term" value="F:lyase activity"/>
    <property type="evidence" value="ECO:0007669"/>
    <property type="project" value="UniProtKB-KW"/>
</dbReference>
<dbReference type="GO" id="GO:0006635">
    <property type="term" value="P:fatty acid beta-oxidation"/>
    <property type="evidence" value="ECO:0007669"/>
    <property type="project" value="TreeGrafter"/>
</dbReference>
<dbReference type="CDD" id="cd06558">
    <property type="entry name" value="crotonase-like"/>
    <property type="match status" value="1"/>
</dbReference>
<dbReference type="FunFam" id="3.90.226.10:FF:000009">
    <property type="entry name" value="Carnitinyl-CoA dehydratase"/>
    <property type="match status" value="1"/>
</dbReference>
<dbReference type="Gene3D" id="3.90.226.10">
    <property type="entry name" value="2-enoyl-CoA Hydratase, Chain A, domain 1"/>
    <property type="match status" value="1"/>
</dbReference>
<dbReference type="Gene3D" id="3.30.559.10">
    <property type="entry name" value="Chloramphenicol acetyltransferase-like domain"/>
    <property type="match status" value="2"/>
</dbReference>
<dbReference type="Gene3D" id="1.10.12.10">
    <property type="entry name" value="Lyase 2-enoyl-coa Hydratase, Chain A, domain 2"/>
    <property type="match status" value="1"/>
</dbReference>
<dbReference type="InterPro" id="IPR023213">
    <property type="entry name" value="CAT-like_dom_sf"/>
</dbReference>
<dbReference type="InterPro" id="IPR029045">
    <property type="entry name" value="ClpP/crotonase-like_dom_sf"/>
</dbReference>
<dbReference type="InterPro" id="IPR018376">
    <property type="entry name" value="Enoyl-CoA_hyd/isom_CS"/>
</dbReference>
<dbReference type="InterPro" id="IPR001753">
    <property type="entry name" value="Enoyl-CoA_hydra/iso"/>
</dbReference>
<dbReference type="InterPro" id="IPR014748">
    <property type="entry name" value="Enoyl-CoA_hydra_C"/>
</dbReference>
<dbReference type="PANTHER" id="PTHR11941">
    <property type="entry name" value="ENOYL-COA HYDRATASE-RELATED"/>
    <property type="match status" value="1"/>
</dbReference>
<dbReference type="PANTHER" id="PTHR11941:SF171">
    <property type="entry name" value="SD19268P"/>
    <property type="match status" value="1"/>
</dbReference>
<dbReference type="Pfam" id="PF00378">
    <property type="entry name" value="ECH_1"/>
    <property type="match status" value="1"/>
</dbReference>
<dbReference type="Pfam" id="PF02458">
    <property type="entry name" value="Transferase"/>
    <property type="match status" value="1"/>
</dbReference>
<dbReference type="SUPFAM" id="SSF52096">
    <property type="entry name" value="ClpP/crotonase"/>
    <property type="match status" value="1"/>
</dbReference>
<dbReference type="PROSITE" id="PS00166">
    <property type="entry name" value="ENOYL_COA_HYDRATASE"/>
    <property type="match status" value="1"/>
</dbReference>
<reference key="1">
    <citation type="journal article" date="2019" name="J. Am. Chem. Soc.">
        <title>Peniphenone and penilactone formation in Penicillium crustosum via 1,4-Michael additions of ortho-quinone methide from hydroxyclavatol to gamma-butyrolactones from Crustosic Acid.</title>
        <authorList>
            <person name="Fan J."/>
            <person name="Liao G."/>
            <person name="Kindinger F."/>
            <person name="Ludwig-Radtke L."/>
            <person name="Yin W.B."/>
            <person name="Li S.M."/>
        </authorList>
    </citation>
    <scope>NUCLEOTIDE SEQUENCE [GENOMIC DNA]</scope>
    <scope>FUNCTION</scope>
    <source>
        <strain>PRB-2</strain>
    </source>
</reference>
<reference key="2">
    <citation type="journal article" date="2020" name="J. Org. Chem.">
        <title>Increasing Structural Diversity of Natural Products by Michael Addition with ortho-Quinone Methide as the Acceptor.</title>
        <authorList>
            <person name="Liao G."/>
            <person name="Fan J."/>
            <person name="Ludwig-Radtke L."/>
            <person name="Backhaus K."/>
            <person name="Li S.M."/>
        </authorList>
    </citation>
    <scope>FUNCTION</scope>
</reference>
<evidence type="ECO:0000250" key="1">
    <source>
        <dbReference type="UniProtKB" id="A0A0E0RXA7"/>
    </source>
</evidence>
<evidence type="ECO:0000250" key="2">
    <source>
        <dbReference type="UniProtKB" id="A0A161CKG1"/>
    </source>
</evidence>
<evidence type="ECO:0000250" key="3">
    <source>
        <dbReference type="UniProtKB" id="P42126"/>
    </source>
</evidence>
<evidence type="ECO:0000256" key="4">
    <source>
        <dbReference type="SAM" id="MobiDB-lite"/>
    </source>
</evidence>
<evidence type="ECO:0000269" key="5">
    <source>
    </source>
</evidence>
<evidence type="ECO:0000269" key="6">
    <source>
    </source>
</evidence>
<evidence type="ECO:0000303" key="7">
    <source>
    </source>
</evidence>
<evidence type="ECO:0000305" key="8"/>
<evidence type="ECO:0000305" key="9">
    <source>
    </source>
</evidence>
<organism>
    <name type="scientific">Penicillium crustosum</name>
    <name type="common">Blue mold fungus</name>
    <dbReference type="NCBI Taxonomy" id="36656"/>
    <lineage>
        <taxon>Eukaryota</taxon>
        <taxon>Fungi</taxon>
        <taxon>Dikarya</taxon>
        <taxon>Ascomycota</taxon>
        <taxon>Pezizomycotina</taxon>
        <taxon>Eurotiomycetes</taxon>
        <taxon>Eurotiomycetidae</taxon>
        <taxon>Eurotiales</taxon>
        <taxon>Aspergillaceae</taxon>
        <taxon>Penicillium</taxon>
    </lineage>
</organism>
<comment type="function">
    <text evidence="1 2 5 6 9">Enoyl-CoA isomerase/hydratase; part of the cla gene cluster that produces clavatol and ortho-quinone methide (PubMed:30811183). The clavatol biosynthesis cluster cla and the terrestric acid cluster tra are both involved in the production of peniphenones and penilactones (PubMed:30811183). The non-reducing PKS claF is responsible for the formation of clavatol from successive condensations of 3 malonyl-CoA units, presumably with a simple acetyl-CoA starter unit, and 2 methylation steps (PubMed:30811183). The esterase claE probably collaborates with claF by catalyzing the hydrolysis of ACP-bound acyl intermediates to free the ACP from stalled intermediates (By similarity). The clavatol oxidase claD then converts clavatol to hydroxyclavatol (PubMed:30811183, PubMed:31860310). Spontaneous dehydration of hydroxyclavatol leads to the accumulation of the highly active ortho-quinone methide (PubMed:30811183). On the other hand, the PKS-NRPS hybrid traA is involved in the formation of crustosic acid, with the help of traB and traD (PubMed:30811183). The polyketide synthase module (PKS) of traA is responsible for the synthesis of the polyketide backbone via the condensation of an acetyl-CoA starter unit with 3 malonyl-CoA units (PubMed:30811183). The downstream nonribosomal peptide synthetase (NRPS) module then amidates the carboxyl end of the polyketide with L-malic acid (PubMed:30811183). Because traA lacks a designated enoylreductase (ER) domain, the required activity is provided the enoyl reductase traG (By similarity). Crustosic acid undergoes decarboxylation and isomerization to the terrestric acid, catalyzed by the 2-oxoglutarate-dependent dioxygenase traH (PubMed:30811183). Both acids are further converted to the 2 gamma-butyrolactones (R)-5-methyltetronic acid and (S)-5-carboxylmethyltetronic acid, with involvement of the cytochrome P450 monooxygenase claJ (PubMed:30811183). Spontaneous addition of the methide to these gamma-butyrolactones leads to peniphenone D and penilactone D, which undergo again stereospecific attacking by methide to give penilactones A and B (PubMed:30811183, PubMed:31860310). The function of the enoyl-CoA isomerase/hydratase claC has not been investigated yet (Probable).</text>
</comment>
<comment type="pathway">
    <text evidence="9">Secondary metabolite biosynthesis.</text>
</comment>
<comment type="similarity">
    <text evidence="8">Belongs to the enoyl-CoA hydratase/isomerase family.</text>
</comment>
<sequence>MERSFTVECPPFEVEISHWDRILPPTHSKRILCFSLPETTDKEKVVEQLHIAFHHTVQRLPLLAGSVVPFSSHQGGRPWLRNIIPEGGAQLIVKDLSEELRFSDLAKTNFSQHLLNTEQLCPLPEVGYFKNESVDVCRFQANFIEGGLLLVVSIIHNAADGRGVTEVIKIFANELSKAQSGETHYPLEPRPDVYRTDRTKLVSGHGVPGSIENHAAWTSDPANAHAQIHNVENSCRTFRISVKALSDLKKSLSATSRGPDEWFSTNDAISAFIWRSIMLARHRAGILNGDAETYVAQPVDCRPHLEIPMPYFGNVIYMTKSSVPLSDLADFESGLGAAARALRADIKGVTAEKFRDLVGYAERTALETHTRLNILEAMSTSGIILTSLFKMDLHGMNFGPIFGDGHIKALRLPARGTQAGAVIVLPRVPDGSCEFMVTEQESTIKCLLEDEYFSRFTNDADSIGASSEEVVAPLPQPPITSEEGMISIDSTPPVIEAITIKSAPDIEPVTIEAATTEVEPITIKSISDTETVTIGITTTEVGPASTEATSPVVEPSTMESDLVEPVTVGTTNSEVESVTTETTASKVQALTTISKEWHLVPAGDVKMPSTLISNRIDAPQVGTIKIIQLNRPAAKNALSVQMVHELSCEIEEIHNERHMGGTRALVIASAVDGVFCAGADLKERKDMSLTETQAFLTSLRGLYSRLAALPIPTIACVSGHALGGGLELALCCHLRVFASNAVAALPETRLAIIPGAGGTYRLPNIVGMSNALDMILTGRGVPASEAAKMGLCNRLVGADGSEDTQAFSNRVLALETGIQLAEQISDAGPIAIRAAIRALSYSCEAVENAAYESVLTTKDRKAALAAFSEKRKPILVGE</sequence>
<accession>A0A481WNM8</accession>